<protein>
    <recommendedName>
        <fullName>Leukocyte surface antigen CD53</fullName>
    </recommendedName>
    <alternativeName>
        <fullName>Cell surface glycoprotein CD53</fullName>
    </alternativeName>
    <alternativeName>
        <fullName>Tetraspanin-25</fullName>
        <shortName>Tspan-25</shortName>
    </alternativeName>
    <cdAntigenName>CD53</cdAntigenName>
</protein>
<keyword id="KW-0002">3D-structure</keyword>
<keyword id="KW-0965">Cell junction</keyword>
<keyword id="KW-1003">Cell membrane</keyword>
<keyword id="KW-0325">Glycoprotein</keyword>
<keyword id="KW-0472">Membrane</keyword>
<keyword id="KW-1267">Proteomics identification</keyword>
<keyword id="KW-1185">Reference proteome</keyword>
<keyword id="KW-0770">Synapse</keyword>
<keyword id="KW-0812">Transmembrane</keyword>
<keyword id="KW-1133">Transmembrane helix</keyword>
<sequence length="219" mass="24341">MGMSSLKLLKYVLFFFNLLFWICGCCILGFGIYLLIHNNFGVLFHNLPSLTLGNVFVIVGSIIMVVAFLGCMGSIKENKCLLMSFFILLLIILLAEVTLAILLFVYEQKLNEYVAKGLTDSIHRYHSDNSTKAAWDSIQSFLQCCGINGTSDWTSGPPASCPSDRKVEGCYAKARLWFHSNFLYIGIITICVCVIEVLGMSFALTLNCQIDKTSQTIGL</sequence>
<name>CD53_HUMAN</name>
<evidence type="ECO:0000250" key="1">
    <source>
        <dbReference type="UniProtKB" id="Q61451"/>
    </source>
</evidence>
<evidence type="ECO:0000255" key="2"/>
<evidence type="ECO:0000269" key="3">
    <source>
    </source>
</evidence>
<evidence type="ECO:0000269" key="4">
    <source>
    </source>
</evidence>
<evidence type="ECO:0000269" key="5">
    <source>
    </source>
</evidence>
<evidence type="ECO:0000269" key="6">
    <source>
    </source>
</evidence>
<evidence type="ECO:0000269" key="7">
    <source>
    </source>
</evidence>
<evidence type="ECO:0000305" key="8"/>
<evidence type="ECO:0007744" key="9">
    <source>
        <dbReference type="PDB" id="6WVG"/>
    </source>
</evidence>
<evidence type="ECO:0007829" key="10">
    <source>
        <dbReference type="PDB" id="6WVG"/>
    </source>
</evidence>
<gene>
    <name type="primary">CD53</name>
    <name type="synonym">MOX44</name>
    <name type="synonym">TSPAN25</name>
</gene>
<dbReference type="EMBL" id="M37033">
    <property type="protein sequence ID" value="AAA35663.1"/>
    <property type="molecule type" value="mRNA"/>
</dbReference>
<dbReference type="EMBL" id="M60871">
    <property type="protein sequence ID" value="AAA51951.1"/>
    <property type="molecule type" value="mRNA"/>
</dbReference>
<dbReference type="EMBL" id="BT019643">
    <property type="protein sequence ID" value="AAV38449.1"/>
    <property type="molecule type" value="mRNA"/>
</dbReference>
<dbReference type="EMBL" id="AK313582">
    <property type="protein sequence ID" value="BAG36352.1"/>
    <property type="molecule type" value="mRNA"/>
</dbReference>
<dbReference type="EMBL" id="AL391064">
    <property type="status" value="NOT_ANNOTATED_CDS"/>
    <property type="molecule type" value="Genomic_DNA"/>
</dbReference>
<dbReference type="EMBL" id="CH471122">
    <property type="protein sequence ID" value="EAW56459.1"/>
    <property type="molecule type" value="Genomic_DNA"/>
</dbReference>
<dbReference type="EMBL" id="BC040693">
    <property type="protein sequence ID" value="AAH40693.1"/>
    <property type="molecule type" value="mRNA"/>
</dbReference>
<dbReference type="CCDS" id="CCDS829.1"/>
<dbReference type="PIR" id="A37243">
    <property type="entry name" value="A37243"/>
</dbReference>
<dbReference type="RefSeq" id="NP_000551.1">
    <property type="nucleotide sequence ID" value="NM_000560.4"/>
</dbReference>
<dbReference type="RefSeq" id="NP_001035122.1">
    <property type="nucleotide sequence ID" value="NM_001040033.2"/>
</dbReference>
<dbReference type="PDB" id="6WVG">
    <property type="method" value="X-ray"/>
    <property type="resolution" value="2.90 A"/>
    <property type="chains" value="A/B=1-219"/>
</dbReference>
<dbReference type="PDBsum" id="6WVG"/>
<dbReference type="SMR" id="P19397"/>
<dbReference type="BioGRID" id="107401">
    <property type="interactions" value="108"/>
</dbReference>
<dbReference type="CORUM" id="P19397"/>
<dbReference type="FunCoup" id="P19397">
    <property type="interactions" value="160"/>
</dbReference>
<dbReference type="IntAct" id="P19397">
    <property type="interactions" value="90"/>
</dbReference>
<dbReference type="STRING" id="9606.ENSP00000497382"/>
<dbReference type="TCDB" id="8.A.40.1.18">
    <property type="family name" value="the tetraspanin (tetraspanin) family"/>
</dbReference>
<dbReference type="GlyCosmos" id="P19397">
    <property type="glycosylation" value="2 sites, No reported glycans"/>
</dbReference>
<dbReference type="GlyGen" id="P19397">
    <property type="glycosylation" value="2 sites, 4 N-linked glycans (1 site)"/>
</dbReference>
<dbReference type="iPTMnet" id="P19397"/>
<dbReference type="PhosphoSitePlus" id="P19397"/>
<dbReference type="SwissPalm" id="P19397"/>
<dbReference type="BioMuta" id="CD53"/>
<dbReference type="DMDM" id="116019"/>
<dbReference type="MassIVE" id="P19397"/>
<dbReference type="PaxDb" id="9606-ENSP00000271324"/>
<dbReference type="PeptideAtlas" id="P19397"/>
<dbReference type="ProteomicsDB" id="53654"/>
<dbReference type="Antibodypedia" id="20101">
    <property type="antibodies" value="737 antibodies from 34 providers"/>
</dbReference>
<dbReference type="DNASU" id="963"/>
<dbReference type="Ensembl" id="ENST00000271324.6">
    <property type="protein sequence ID" value="ENSP00000271324.5"/>
    <property type="gene ID" value="ENSG00000143119.15"/>
</dbReference>
<dbReference type="Ensembl" id="ENST00000648608.2">
    <property type="protein sequence ID" value="ENSP00000497382.1"/>
    <property type="gene ID" value="ENSG00000143119.15"/>
</dbReference>
<dbReference type="GeneID" id="963"/>
<dbReference type="KEGG" id="hsa:963"/>
<dbReference type="MANE-Select" id="ENST00000271324.6">
    <property type="protein sequence ID" value="ENSP00000271324.5"/>
    <property type="RefSeq nucleotide sequence ID" value="NM_000560.4"/>
    <property type="RefSeq protein sequence ID" value="NP_000551.1"/>
</dbReference>
<dbReference type="UCSC" id="uc001dzx.4">
    <property type="organism name" value="human"/>
</dbReference>
<dbReference type="AGR" id="HGNC:1686"/>
<dbReference type="CTD" id="963"/>
<dbReference type="DisGeNET" id="963"/>
<dbReference type="GeneCards" id="CD53"/>
<dbReference type="HGNC" id="HGNC:1686">
    <property type="gene designation" value="CD53"/>
</dbReference>
<dbReference type="HPA" id="ENSG00000143119">
    <property type="expression patterns" value="Tissue enhanced (lymphoid)"/>
</dbReference>
<dbReference type="MIM" id="151525">
    <property type="type" value="gene"/>
</dbReference>
<dbReference type="neXtProt" id="NX_P19397"/>
<dbReference type="OpenTargets" id="ENSG00000143119"/>
<dbReference type="PharmGKB" id="PA26225"/>
<dbReference type="VEuPathDB" id="HostDB:ENSG00000143119"/>
<dbReference type="eggNOG" id="KOG3882">
    <property type="taxonomic scope" value="Eukaryota"/>
</dbReference>
<dbReference type="GeneTree" id="ENSGT00940000159669"/>
<dbReference type="HOGENOM" id="CLU_055524_4_3_1"/>
<dbReference type="InParanoid" id="P19397"/>
<dbReference type="OMA" id="IQSFLHC"/>
<dbReference type="OrthoDB" id="432835at2759"/>
<dbReference type="PAN-GO" id="P19397">
    <property type="GO annotations" value="1 GO annotation based on evolutionary models"/>
</dbReference>
<dbReference type="PhylomeDB" id="P19397"/>
<dbReference type="TreeFam" id="TF352892"/>
<dbReference type="PathwayCommons" id="P19397"/>
<dbReference type="Reactome" id="R-HSA-6798695">
    <property type="pathway name" value="Neutrophil degranulation"/>
</dbReference>
<dbReference type="SignaLink" id="P19397"/>
<dbReference type="BioGRID-ORCS" id="963">
    <property type="hits" value="12 hits in 1158 CRISPR screens"/>
</dbReference>
<dbReference type="ChiTaRS" id="CD53">
    <property type="organism name" value="human"/>
</dbReference>
<dbReference type="GeneWiki" id="CD53"/>
<dbReference type="GenomeRNAi" id="963"/>
<dbReference type="Pharos" id="P19397">
    <property type="development level" value="Tbio"/>
</dbReference>
<dbReference type="PRO" id="PR:P19397"/>
<dbReference type="Proteomes" id="UP000005640">
    <property type="component" value="Chromosome 1"/>
</dbReference>
<dbReference type="RNAct" id="P19397">
    <property type="molecule type" value="protein"/>
</dbReference>
<dbReference type="Bgee" id="ENSG00000143119">
    <property type="expression patterns" value="Expressed in blood and 196 other cell types or tissues"/>
</dbReference>
<dbReference type="GO" id="GO:0005911">
    <property type="term" value="C:cell-cell junction"/>
    <property type="evidence" value="ECO:0000250"/>
    <property type="project" value="UniProtKB"/>
</dbReference>
<dbReference type="GO" id="GO:0070062">
    <property type="term" value="C:extracellular exosome"/>
    <property type="evidence" value="ECO:0007005"/>
    <property type="project" value="UniProtKB"/>
</dbReference>
<dbReference type="GO" id="GO:0001772">
    <property type="term" value="C:immunological synapse"/>
    <property type="evidence" value="ECO:0000314"/>
    <property type="project" value="UniProtKB"/>
</dbReference>
<dbReference type="GO" id="GO:0005886">
    <property type="term" value="C:plasma membrane"/>
    <property type="evidence" value="ECO:0000314"/>
    <property type="project" value="UniProt"/>
</dbReference>
<dbReference type="GO" id="GO:0035579">
    <property type="term" value="C:specific granule membrane"/>
    <property type="evidence" value="ECO:0000304"/>
    <property type="project" value="Reactome"/>
</dbReference>
<dbReference type="GO" id="GO:0045202">
    <property type="term" value="C:synapse"/>
    <property type="evidence" value="ECO:0007669"/>
    <property type="project" value="UniProtKB-SubCell"/>
</dbReference>
<dbReference type="GO" id="GO:0070821">
    <property type="term" value="C:tertiary granule membrane"/>
    <property type="evidence" value="ECO:0000304"/>
    <property type="project" value="Reactome"/>
</dbReference>
<dbReference type="GO" id="GO:0042802">
    <property type="term" value="F:identical protein binding"/>
    <property type="evidence" value="ECO:0000353"/>
    <property type="project" value="IntAct"/>
</dbReference>
<dbReference type="GO" id="GO:0043495">
    <property type="term" value="F:protein-membrane adaptor activity"/>
    <property type="evidence" value="ECO:0000314"/>
    <property type="project" value="UniProt"/>
</dbReference>
<dbReference type="GO" id="GO:1901741">
    <property type="term" value="P:positive regulation of myoblast fusion"/>
    <property type="evidence" value="ECO:0000250"/>
    <property type="project" value="UniProtKB"/>
</dbReference>
<dbReference type="GO" id="GO:0043113">
    <property type="term" value="P:receptor clustering"/>
    <property type="evidence" value="ECO:0000314"/>
    <property type="project" value="UniProt"/>
</dbReference>
<dbReference type="GO" id="GO:0007165">
    <property type="term" value="P:signal transduction"/>
    <property type="evidence" value="ECO:0000303"/>
    <property type="project" value="ProtInc"/>
</dbReference>
<dbReference type="CDD" id="cd03164">
    <property type="entry name" value="CD53_like_LEL"/>
    <property type="match status" value="1"/>
</dbReference>
<dbReference type="FunFam" id="1.10.1450.10:FF:000024">
    <property type="entry name" value="Tetraspanin"/>
    <property type="match status" value="1"/>
</dbReference>
<dbReference type="Gene3D" id="1.10.1450.10">
    <property type="entry name" value="Tetraspanin"/>
    <property type="match status" value="1"/>
</dbReference>
<dbReference type="InterPro" id="IPR018499">
    <property type="entry name" value="Tetraspanin/Peripherin"/>
</dbReference>
<dbReference type="InterPro" id="IPR000301">
    <property type="entry name" value="Tetraspanin_animals"/>
</dbReference>
<dbReference type="InterPro" id="IPR018503">
    <property type="entry name" value="Tetraspanin_CS"/>
</dbReference>
<dbReference type="InterPro" id="IPR008952">
    <property type="entry name" value="Tetraspanin_EC2_sf"/>
</dbReference>
<dbReference type="PANTHER" id="PTHR19282:SF39">
    <property type="entry name" value="LEUKOCYTE SURFACE ANTIGEN CD53"/>
    <property type="match status" value="1"/>
</dbReference>
<dbReference type="PANTHER" id="PTHR19282">
    <property type="entry name" value="TETRASPANIN"/>
    <property type="match status" value="1"/>
</dbReference>
<dbReference type="Pfam" id="PF00335">
    <property type="entry name" value="Tetraspanin"/>
    <property type="match status" value="1"/>
</dbReference>
<dbReference type="PIRSF" id="PIRSF002419">
    <property type="entry name" value="Tetraspanin"/>
    <property type="match status" value="1"/>
</dbReference>
<dbReference type="PRINTS" id="PR00259">
    <property type="entry name" value="TMFOUR"/>
</dbReference>
<dbReference type="SUPFAM" id="SSF48652">
    <property type="entry name" value="Tetraspanin"/>
    <property type="match status" value="1"/>
</dbReference>
<dbReference type="PROSITE" id="PS00421">
    <property type="entry name" value="TM4_1"/>
    <property type="match status" value="1"/>
</dbReference>
<comment type="function">
    <text evidence="1 4 6 7">Structural component of specialized membrane microdomains known as tetraspanin-enriched microdomains (TERMs), which act as platforms for receptor clustering and signaling (PubMed:28487417). Participates thereby in diverse biological functions such as cell signal transduction, adhesion, migration and protein trafficking (PubMed:32974937, PubMed:35767951). Plays a role in the activation of monocytes and B-cells (PubMed:8335905). Acts as an essential regulator of B-cell development by promoting interleukin-7 receptor/IL7R signaling (By similarity). Also promotes, in B-cells, the BCR signaling by recruiting PKC to the plasma membrane in order to phosphorylate its substrates (PubMed:28487417). Plays an essential role in B- and T-cells homing to lymph nodes by stabilizing L-selectin/SELL cell surface expression (By similarity). Also mediates metabolic and inflammatory functions in hepatocytes and adipose tissue by promoting TNF-alpha and LPS signaling independent of the immune compartment (By similarity).</text>
</comment>
<comment type="subunit">
    <text evidence="1 3 6">Interacts with SCIMP (PubMed:21930792). Interacts with CD45/PTPRC (PubMed:35767951). Interacts with IL7R (By similarity). Interacts with RBL2 and PPP2CA (By similarity).</text>
</comment>
<comment type="interaction">
    <interactant intactId="EBI-6657396">
        <id>P19397</id>
    </interactant>
    <interactant intactId="EBI-11957045">
        <id>Q9NVV5-2</id>
        <label>AIG1</label>
    </interactant>
    <organismsDiffer>false</organismsDiffer>
    <experiments>3</experiments>
</comment>
<comment type="interaction">
    <interactant intactId="EBI-6657396">
        <id>P19397</id>
    </interactant>
    <interactant intactId="EBI-715495">
        <id>P05090</id>
        <label>APOD</label>
    </interactant>
    <organismsDiffer>false</organismsDiffer>
    <experiments>3</experiments>
</comment>
<comment type="interaction">
    <interactant intactId="EBI-6657396">
        <id>P19397</id>
    </interactant>
    <interactant intactId="EBI-11343438">
        <id>Q3SXY8</id>
        <label>ARL13B</label>
    </interactant>
    <organismsDiffer>false</organismsDiffer>
    <experiments>3</experiments>
</comment>
<comment type="interaction">
    <interactant intactId="EBI-6657396">
        <id>P19397</id>
    </interactant>
    <interactant intactId="EBI-12808270">
        <id>P07307-3</id>
        <label>ASGR2</label>
    </interactant>
    <organismsDiffer>false</organismsDiffer>
    <experiments>3</experiments>
</comment>
<comment type="interaction">
    <interactant intactId="EBI-6657396">
        <id>P19397</id>
    </interactant>
    <interactant intactId="EBI-721179">
        <id>P27449</id>
        <label>ATP6V0C</label>
    </interactant>
    <organismsDiffer>false</organismsDiffer>
    <experiments>3</experiments>
</comment>
<comment type="interaction">
    <interactant intactId="EBI-6657396">
        <id>P19397</id>
    </interactant>
    <interactant intactId="EBI-747430">
        <id>Q9BXK5</id>
        <label>BCL2L13</label>
    </interactant>
    <organismsDiffer>false</organismsDiffer>
    <experiments>3</experiments>
</comment>
<comment type="interaction">
    <interactant intactId="EBI-6657396">
        <id>P19397</id>
    </interactant>
    <interactant intactId="EBI-700794">
        <id>Q13323</id>
        <label>BIK</label>
    </interactant>
    <organismsDiffer>false</organismsDiffer>
    <experiments>3</experiments>
</comment>
<comment type="interaction">
    <interactant intactId="EBI-6657396">
        <id>P19397</id>
    </interactant>
    <interactant intactId="EBI-8648738">
        <id>Q8WVV5</id>
        <label>BTN2A2</label>
    </interactant>
    <organismsDiffer>false</organismsDiffer>
    <experiments>3</experiments>
</comment>
<comment type="interaction">
    <interactant intactId="EBI-6657396">
        <id>P19397</id>
    </interactant>
    <interactant intactId="EBI-12062109">
        <id>Q86Z23</id>
        <label>C1QL4</label>
    </interactant>
    <organismsDiffer>false</organismsDiffer>
    <experiments>3</experiments>
</comment>
<comment type="interaction">
    <interactant intactId="EBI-6657396">
        <id>P19397</id>
    </interactant>
    <interactant intactId="EBI-14259393">
        <id>Q8IX05</id>
        <label>CD302</label>
    </interactant>
    <organismsDiffer>false</organismsDiffer>
    <experiments>3</experiments>
</comment>
<comment type="interaction">
    <interactant intactId="EBI-6657396">
        <id>P19397</id>
    </interactant>
    <interactant intactId="EBI-6139068">
        <id>P11049</id>
        <label>CD37</label>
    </interactant>
    <organismsDiffer>false</organismsDiffer>
    <experiments>3</experiments>
</comment>
<comment type="interaction">
    <interactant intactId="EBI-6657396">
        <id>P19397</id>
    </interactant>
    <interactant intactId="EBI-6657396">
        <id>P19397</id>
        <label>CD53</label>
    </interactant>
    <organismsDiffer>false</organismsDiffer>
    <experiments>3</experiments>
</comment>
<comment type="interaction">
    <interactant intactId="EBI-6657396">
        <id>P19397</id>
    </interactant>
    <interactant intactId="EBI-4402346">
        <id>P51798</id>
        <label>CLCN7</label>
    </interactant>
    <organismsDiffer>false</organismsDiffer>
    <experiments>3</experiments>
</comment>
<comment type="interaction">
    <interactant intactId="EBI-6657396">
        <id>P19397</id>
    </interactant>
    <interactant intactId="EBI-12256978">
        <id>Q8N6F1-2</id>
        <label>CLDN19</label>
    </interactant>
    <organismsDiffer>false</organismsDiffer>
    <experiments>3</experiments>
</comment>
<comment type="interaction">
    <interactant intactId="EBI-6657396">
        <id>P19397</id>
    </interactant>
    <interactant intactId="EBI-740744">
        <id>O95471</id>
        <label>CLDN7</label>
    </interactant>
    <organismsDiffer>false</organismsDiffer>
    <experiments>3</experiments>
</comment>
<comment type="interaction">
    <interactant intactId="EBI-6657396">
        <id>P19397</id>
    </interactant>
    <interactant intactId="EBI-11989440">
        <id>Q9BXN2-6</id>
        <label>CLEC7A</label>
    </interactant>
    <organismsDiffer>false</organismsDiffer>
    <experiments>3</experiments>
</comment>
<comment type="interaction">
    <interactant intactId="EBI-6657396">
        <id>P19397</id>
    </interactant>
    <interactant intactId="EBI-12172273">
        <id>O95406</id>
        <label>CNIH1</label>
    </interactant>
    <organismsDiffer>false</organismsDiffer>
    <experiments>3</experiments>
</comment>
<comment type="interaction">
    <interactant intactId="EBI-6657396">
        <id>P19397</id>
    </interactant>
    <interactant intactId="EBI-12815321">
        <id>Q6PI25</id>
        <label>CNIH2</label>
    </interactant>
    <organismsDiffer>false</organismsDiffer>
    <experiments>3</experiments>
</comment>
<comment type="interaction">
    <interactant intactId="EBI-6657396">
        <id>P19397</id>
    </interactant>
    <interactant intactId="EBI-12211159">
        <id>P29400-2</id>
        <label>COL4A5</label>
    </interactant>
    <organismsDiffer>false</organismsDiffer>
    <experiments>3</experiments>
</comment>
<comment type="interaction">
    <interactant intactId="EBI-6657396">
        <id>P19397</id>
    </interactant>
    <interactant intactId="EBI-6942903">
        <id>Q96BA8</id>
        <label>CREB3L1</label>
    </interactant>
    <organismsDiffer>false</organismsDiffer>
    <experiments>5</experiments>
</comment>
<comment type="interaction">
    <interactant intactId="EBI-6657396">
        <id>P19397</id>
    </interactant>
    <interactant intactId="EBI-12019274">
        <id>Q4LDR2</id>
        <label>CTXN3</label>
    </interactant>
    <organismsDiffer>false</organismsDiffer>
    <experiments>3</experiments>
</comment>
<comment type="interaction">
    <interactant intactId="EBI-6657396">
        <id>P19397</id>
    </interactant>
    <interactant intactId="EBI-2680384">
        <id>Q9BQA9</id>
        <label>CYBC1</label>
    </interactant>
    <organismsDiffer>false</organismsDiffer>
    <experiments>3</experiments>
</comment>
<comment type="interaction">
    <interactant intactId="EBI-6657396">
        <id>P19397</id>
    </interactant>
    <interactant intactId="EBI-19128181">
        <id>P0DPD6-3</id>
        <label>ECE2</label>
    </interactant>
    <organismsDiffer>false</organismsDiffer>
    <experiments>3</experiments>
</comment>
<comment type="interaction">
    <interactant intactId="EBI-6657396">
        <id>P19397</id>
    </interactant>
    <interactant intactId="EBI-1753674">
        <id>P52803</id>
        <label>EFNA5</label>
    </interactant>
    <organismsDiffer>false</organismsDiffer>
    <experiments>3</experiments>
</comment>
<comment type="interaction">
    <interactant intactId="EBI-6657396">
        <id>P19397</id>
    </interactant>
    <interactant intactId="EBI-4319440">
        <id>P54849</id>
        <label>EMP1</label>
    </interactant>
    <organismsDiffer>false</organismsDiffer>
    <experiments>3</experiments>
</comment>
<comment type="interaction">
    <interactant intactId="EBI-6657396">
        <id>P19397</id>
    </interactant>
    <interactant intactId="EBI-711490">
        <id>Q9UKR5</id>
        <label>ERG28</label>
    </interactant>
    <organismsDiffer>false</organismsDiffer>
    <experiments>3</experiments>
</comment>
<comment type="interaction">
    <interactant intactId="EBI-6657396">
        <id>P19397</id>
    </interactant>
    <interactant intactId="EBI-18304435">
        <id>Q5JX71</id>
        <label>FAM209A</label>
    </interactant>
    <organismsDiffer>false</organismsDiffer>
    <experiments>3</experiments>
</comment>
<comment type="interaction">
    <interactant intactId="EBI-6657396">
        <id>P19397</id>
    </interactant>
    <interactant intactId="EBI-18908258">
        <id>O00258</id>
        <label>GET1</label>
    </interactant>
    <organismsDiffer>false</organismsDiffer>
    <experiments>3</experiments>
</comment>
<comment type="interaction">
    <interactant intactId="EBI-6657396">
        <id>P19397</id>
    </interactant>
    <interactant intactId="EBI-6166686">
        <id>Q96F15</id>
        <label>GIMAP5</label>
    </interactant>
    <organismsDiffer>false</organismsDiffer>
    <experiments>3</experiments>
</comment>
<comment type="interaction">
    <interactant intactId="EBI-6657396">
        <id>P19397</id>
    </interactant>
    <interactant intactId="EBI-17458373">
        <id>P48165</id>
        <label>GJA8</label>
    </interactant>
    <organismsDiffer>false</organismsDiffer>
    <experiments>3</experiments>
</comment>
<comment type="interaction">
    <interactant intactId="EBI-6657396">
        <id>P19397</id>
    </interactant>
    <interactant intactId="EBI-11343451">
        <id>Q9NPR9</id>
        <label>GPR108</label>
    </interactant>
    <organismsDiffer>false</organismsDiffer>
    <experiments>3</experiments>
</comment>
<comment type="interaction">
    <interactant intactId="EBI-6657396">
        <id>P19397</id>
    </interactant>
    <interactant intactId="EBI-13345167">
        <id>Q8TDT2</id>
        <label>GPR152</label>
    </interactant>
    <organismsDiffer>false</organismsDiffer>
    <experiments>3</experiments>
</comment>
<comment type="interaction">
    <interactant intactId="EBI-6657396">
        <id>P19397</id>
    </interactant>
    <interactant intactId="EBI-11721746">
        <id>Q8TED1</id>
        <label>GPX8</label>
    </interactant>
    <organismsDiffer>false</organismsDiffer>
    <experiments>3</experiments>
</comment>
<comment type="interaction">
    <interactant intactId="EBI-6657396">
        <id>P19397</id>
    </interactant>
    <interactant intactId="EBI-7932862">
        <id>Q01628</id>
        <label>IFITM3</label>
    </interactant>
    <organismsDiffer>false</organismsDiffer>
    <experiments>3</experiments>
</comment>
<comment type="interaction">
    <interactant intactId="EBI-6657396">
        <id>P19397</id>
    </interactant>
    <interactant intactId="EBI-720480">
        <id>P24593</id>
        <label>IGFBP5</label>
    </interactant>
    <organismsDiffer>false</organismsDiffer>
    <experiments>3</experiments>
</comment>
<comment type="interaction">
    <interactant intactId="EBI-6657396">
        <id>P19397</id>
    </interactant>
    <interactant intactId="EBI-17272405">
        <id>Q8N743</id>
        <label>KIR3DL3</label>
    </interactant>
    <organismsDiffer>false</organismsDiffer>
    <experiments>3</experiments>
</comment>
<comment type="interaction">
    <interactant intactId="EBI-6657396">
        <id>P19397</id>
    </interactant>
    <interactant intactId="EBI-8070286">
        <id>O43561-2</id>
        <label>LAT</label>
    </interactant>
    <organismsDiffer>false</organismsDiffer>
    <experiments>3</experiments>
</comment>
<comment type="interaction">
    <interactant intactId="EBI-6657396">
        <id>P19397</id>
    </interactant>
    <interactant intactId="EBI-2820517">
        <id>Q8TAF8</id>
        <label>LHFPL5</label>
    </interactant>
    <organismsDiffer>false</organismsDiffer>
    <experiments>3</experiments>
</comment>
<comment type="interaction">
    <interactant intactId="EBI-6657396">
        <id>P19397</id>
    </interactant>
    <interactant intactId="EBI-12033434">
        <id>Q9UBY5</id>
        <label>LPAR3</label>
    </interactant>
    <organismsDiffer>false</organismsDiffer>
    <experiments>3</experiments>
</comment>
<comment type="interaction">
    <interactant intactId="EBI-6657396">
        <id>P19397</id>
    </interactant>
    <interactant intactId="EBI-10200825">
        <id>Q8N8F7</id>
        <label>LSMEM1</label>
    </interactant>
    <organismsDiffer>false</organismsDiffer>
    <experiments>3</experiments>
</comment>
<comment type="interaction">
    <interactant intactId="EBI-6657396">
        <id>P19397</id>
    </interactant>
    <interactant intactId="EBI-3932027">
        <id>P21145</id>
        <label>MAL</label>
    </interactant>
    <organismsDiffer>false</organismsDiffer>
    <experiments>3</experiments>
</comment>
<comment type="interaction">
    <interactant intactId="EBI-6657396">
        <id>P19397</id>
    </interactant>
    <interactant intactId="EBI-12806656">
        <id>Q96HJ5</id>
        <label>MS4A3</label>
    </interactant>
    <organismsDiffer>false</organismsDiffer>
    <experiments>3</experiments>
</comment>
<comment type="interaction">
    <interactant intactId="EBI-6657396">
        <id>P19397</id>
    </interactant>
    <interactant intactId="EBI-17263240">
        <id>P15941-11</id>
        <label>MUC1</label>
    </interactant>
    <organismsDiffer>false</organismsDiffer>
    <experiments>3</experiments>
</comment>
<comment type="interaction">
    <interactant intactId="EBI-6657396">
        <id>P19397</id>
    </interactant>
    <interactant intactId="EBI-3919611">
        <id>Q16617</id>
        <label>NKG7</label>
    </interactant>
    <organismsDiffer>false</organismsDiffer>
    <experiments>3</experiments>
</comment>
<comment type="interaction">
    <interactant intactId="EBI-6657396">
        <id>P19397</id>
    </interactant>
    <interactant intactId="EBI-692836">
        <id>P26678</id>
        <label>PLN</label>
    </interactant>
    <organismsDiffer>false</organismsDiffer>
    <experiments>3</experiments>
</comment>
<comment type="interaction">
    <interactant intactId="EBI-6657396">
        <id>P19397</id>
    </interactant>
    <interactant intactId="EBI-608347">
        <id>Q04941</id>
        <label>PLP2</label>
    </interactant>
    <organismsDiffer>false</organismsDiffer>
    <experiments>3</experiments>
</comment>
<comment type="interaction">
    <interactant intactId="EBI-6657396">
        <id>P19397</id>
    </interactant>
    <interactant intactId="EBI-2845982">
        <id>Q01453</id>
        <label>PMP22</label>
    </interactant>
    <organismsDiffer>false</organismsDiffer>
    <experiments>3</experiments>
</comment>
<comment type="interaction">
    <interactant intactId="EBI-6657396">
        <id>P19397</id>
    </interactant>
    <interactant intactId="EBI-1052363">
        <id>Q9NS64</id>
        <label>RPRM</label>
    </interactant>
    <organismsDiffer>false</organismsDiffer>
    <experiments>3</experiments>
</comment>
<comment type="interaction">
    <interactant intactId="EBI-6657396">
        <id>P19397</id>
    </interactant>
    <interactant intactId="EBI-3920694">
        <id>Q9NR31</id>
        <label>SAR1A</label>
    </interactant>
    <organismsDiffer>false</organismsDiffer>
    <experiments>3</experiments>
</comment>
<comment type="interaction">
    <interactant intactId="EBI-6657396">
        <id>P19397</id>
    </interactant>
    <interactant intactId="EBI-17284533">
        <id>A2A2V5</id>
        <label>SERTM1</label>
    </interactant>
    <organismsDiffer>false</organismsDiffer>
    <experiments>3</experiments>
</comment>
<comment type="interaction">
    <interactant intactId="EBI-6657396">
        <id>P19397</id>
    </interactant>
    <interactant intactId="EBI-12870360">
        <id>P78382</id>
        <label>SLC35A1</label>
    </interactant>
    <organismsDiffer>false</organismsDiffer>
    <experiments>3</experiments>
</comment>
<comment type="interaction">
    <interactant intactId="EBI-6657396">
        <id>P19397</id>
    </interactant>
    <interactant intactId="EBI-5235586">
        <id>Q8TBB6</id>
        <label>SLC7A14</label>
    </interactant>
    <organismsDiffer>false</organismsDiffer>
    <experiments>3</experiments>
</comment>
<comment type="interaction">
    <interactant intactId="EBI-6657396">
        <id>P19397</id>
    </interactant>
    <interactant intactId="EBI-10226799">
        <id>Q0VAQ4</id>
        <label>SMAGP</label>
    </interactant>
    <organismsDiffer>false</organismsDiffer>
    <experiments>3</experiments>
</comment>
<comment type="interaction">
    <interactant intactId="EBI-6657396">
        <id>P19397</id>
    </interactant>
    <interactant intactId="EBI-741850">
        <id>Q9BZL3</id>
        <label>SMIM3</label>
    </interactant>
    <organismsDiffer>false</organismsDiffer>
    <experiments>3</experiments>
</comment>
<comment type="interaction">
    <interactant intactId="EBI-6657396">
        <id>P19397</id>
    </interactant>
    <interactant intactId="EBI-11957067">
        <id>Q6UX34</id>
        <label>SNORC</label>
    </interactant>
    <organismsDiffer>false</organismsDiffer>
    <experiments>3</experiments>
</comment>
<comment type="interaction">
    <interactant intactId="EBI-6657396">
        <id>P19397</id>
    </interactant>
    <interactant intactId="EBI-12908338">
        <id>Q96JF0-2</id>
        <label>ST6GAL2</label>
    </interactant>
    <organismsDiffer>false</organismsDiffer>
    <experiments>3</experiments>
</comment>
<comment type="interaction">
    <interactant intactId="EBI-6657396">
        <id>P19397</id>
    </interactant>
    <interactant intactId="EBI-12200293">
        <id>P0DN84</id>
        <label>STRIT1</label>
    </interactant>
    <organismsDiffer>false</organismsDiffer>
    <experiments>3</experiments>
</comment>
<comment type="interaction">
    <interactant intactId="EBI-6657396">
        <id>P19397</id>
    </interactant>
    <interactant intactId="EBI-11956649">
        <id>P32856-2</id>
        <label>STX2</label>
    </interactant>
    <organismsDiffer>false</organismsDiffer>
    <experiments>3</experiments>
</comment>
<comment type="interaction">
    <interactant intactId="EBI-6657396">
        <id>P19397</id>
    </interactant>
    <interactant intactId="EBI-10694905">
        <id>Q5BJH2-2</id>
        <label>TMEM128</label>
    </interactant>
    <organismsDiffer>false</organismsDiffer>
    <experiments>3</experiments>
</comment>
<comment type="interaction">
    <interactant intactId="EBI-6657396">
        <id>P19397</id>
    </interactant>
    <interactant intactId="EBI-2844246">
        <id>Q9NV12</id>
        <label>TMEM140</label>
    </interactant>
    <organismsDiffer>false</organismsDiffer>
    <experiments>3</experiments>
</comment>
<comment type="interaction">
    <interactant intactId="EBI-6657396">
        <id>P19397</id>
    </interactant>
    <interactant intactId="EBI-10173151">
        <id>A2RU14</id>
        <label>TMEM218</label>
    </interactant>
    <organismsDiffer>false</organismsDiffer>
    <experiments>3</experiments>
</comment>
<comment type="interaction">
    <interactant intactId="EBI-6657396">
        <id>P19397</id>
    </interactant>
    <interactant intactId="EBI-12195227">
        <id>Q8NBD8</id>
        <label>TMEM229B</label>
    </interactant>
    <organismsDiffer>false</organismsDiffer>
    <experiments>3</experiments>
</comment>
<comment type="interaction">
    <interactant intactId="EBI-6657396">
        <id>P19397</id>
    </interactant>
    <interactant intactId="EBI-10982110">
        <id>Q96Q45-2</id>
        <label>TMEM237</label>
    </interactant>
    <organismsDiffer>false</organismsDiffer>
    <experiments>3</experiments>
</comment>
<comment type="interaction">
    <interactant intactId="EBI-6657396">
        <id>P19397</id>
    </interactant>
    <interactant intactId="EBI-2852148">
        <id>Q9H2L4</id>
        <label>TMEM60</label>
    </interactant>
    <organismsDiffer>false</organismsDiffer>
    <experiments>3</experiments>
</comment>
<comment type="interaction">
    <interactant intactId="EBI-6657396">
        <id>P19397</id>
    </interactant>
    <interactant intactId="EBI-2548832">
        <id>Q8N661</id>
        <label>TMEM86B</label>
    </interactant>
    <organismsDiffer>false</organismsDiffer>
    <experiments>3</experiments>
</comment>
<comment type="interaction">
    <interactant intactId="EBI-6657396">
        <id>P19397</id>
    </interactant>
    <interactant intactId="EBI-12111910">
        <id>Q5BJF2</id>
        <label>TMEM97</label>
    </interactant>
    <organismsDiffer>false</organismsDiffer>
    <experiments>3</experiments>
</comment>
<comment type="interaction">
    <interactant intactId="EBI-6657396">
        <id>P19397</id>
    </interactant>
    <interactant intactId="EBI-11996766">
        <id>Q8N609</id>
        <label>TRAM1L1</label>
    </interactant>
    <organismsDiffer>false</organismsDiffer>
    <experiments>3</experiments>
</comment>
<comment type="interaction">
    <interactant intactId="EBI-6657396">
        <id>P19397</id>
    </interactant>
    <interactant intactId="EBI-12195249">
        <id>Q5TGU0</id>
        <label>TSPO2</label>
    </interactant>
    <organismsDiffer>false</organismsDiffer>
    <experiments>3</experiments>
</comment>
<comment type="interaction">
    <interactant intactId="EBI-6657396">
        <id>P19397</id>
    </interactant>
    <interactant intactId="EBI-11988865">
        <id>A5PKU2</id>
        <label>TUSC5</label>
    </interactant>
    <organismsDiffer>false</organismsDiffer>
    <experiments>3</experiments>
</comment>
<comment type="interaction">
    <interactant intactId="EBI-6657396">
        <id>P19397</id>
    </interactant>
    <interactant intactId="EBI-2819725">
        <id>Q9Y5Z9</id>
        <label>UBIAD1</label>
    </interactant>
    <organismsDiffer>false</organismsDiffer>
    <experiments>3</experiments>
</comment>
<comment type="interaction">
    <interactant intactId="EBI-6657396">
        <id>P19397</id>
    </interactant>
    <interactant intactId="EBI-12237619">
        <id>O75841</id>
        <label>UPK1B</label>
    </interactant>
    <organismsDiffer>false</organismsDiffer>
    <experiments>3</experiments>
</comment>
<comment type="interaction">
    <interactant intactId="EBI-6657396">
        <id>P19397</id>
    </interactant>
    <interactant intactId="EBI-10191195">
        <id>O95183</id>
        <label>VAMP5</label>
    </interactant>
    <organismsDiffer>false</organismsDiffer>
    <experiments>3</experiments>
</comment>
<comment type="interaction">
    <interactant intactId="EBI-6657396">
        <id>P19397</id>
    </interactant>
    <interactant intactId="EBI-12190699">
        <id>Q6UX27-3</id>
        <label>VSTM1</label>
    </interactant>
    <organismsDiffer>false</organismsDiffer>
    <experiments>3</experiments>
</comment>
<comment type="subcellular location">
    <subcellularLocation>
        <location evidence="4">Cell membrane</location>
    </subcellularLocation>
    <subcellularLocation>
        <location evidence="1">Cell junction</location>
    </subcellularLocation>
    <subcellularLocation>
        <location>Membrane</location>
        <topology>Multi-pass membrane protein</topology>
    </subcellularLocation>
    <subcellularLocation>
        <location evidence="6">Synapse</location>
    </subcellularLocation>
    <text evidence="1">Concentrates in localized microdomains along the plasma membrane at the contact sites between cells of fused myotubes.</text>
</comment>
<comment type="tissue specificity">
    <text evidence="7">B-cells, monocytes, macrophages, neutrophils, single (CD4 or CD8) positive thymocytes and peripheral T-cells.</text>
</comment>
<comment type="similarity">
    <text evidence="8">Belongs to the tetraspanin (TM4SF) family.</text>
</comment>
<comment type="online information" name="Atlas of Genetics and Cytogenetics in Oncology and Haematology">
    <link uri="https://atlasgeneticsoncology.org/gene/983/CD53"/>
</comment>
<organism>
    <name type="scientific">Homo sapiens</name>
    <name type="common">Human</name>
    <dbReference type="NCBI Taxonomy" id="9606"/>
    <lineage>
        <taxon>Eukaryota</taxon>
        <taxon>Metazoa</taxon>
        <taxon>Chordata</taxon>
        <taxon>Craniata</taxon>
        <taxon>Vertebrata</taxon>
        <taxon>Euteleostomi</taxon>
        <taxon>Mammalia</taxon>
        <taxon>Eutheria</taxon>
        <taxon>Euarchontoglires</taxon>
        <taxon>Primates</taxon>
        <taxon>Haplorrhini</taxon>
        <taxon>Catarrhini</taxon>
        <taxon>Hominidae</taxon>
        <taxon>Homo</taxon>
    </lineage>
</organism>
<feature type="chain" id="PRO_0000219212" description="Leukocyte surface antigen CD53">
    <location>
        <begin position="1"/>
        <end position="219"/>
    </location>
</feature>
<feature type="topological domain" description="Cytoplasmic" evidence="2">
    <location>
        <begin position="1"/>
        <end position="11"/>
    </location>
</feature>
<feature type="transmembrane region" description="Helical" evidence="2">
    <location>
        <begin position="12"/>
        <end position="32"/>
    </location>
</feature>
<feature type="topological domain" description="Extracellular" evidence="2">
    <location>
        <begin position="33"/>
        <end position="54"/>
    </location>
</feature>
<feature type="transmembrane region" description="Helical" evidence="2">
    <location>
        <begin position="55"/>
        <end position="69"/>
    </location>
</feature>
<feature type="topological domain" description="Cytoplasmic" evidence="2">
    <location>
        <begin position="70"/>
        <end position="80"/>
    </location>
</feature>
<feature type="transmembrane region" description="Helical" evidence="2">
    <location>
        <begin position="81"/>
        <end position="106"/>
    </location>
</feature>
<feature type="topological domain" description="Extracellular" evidence="2">
    <location>
        <begin position="107"/>
        <end position="181"/>
    </location>
</feature>
<feature type="transmembrane region" description="Helical" evidence="2">
    <location>
        <begin position="182"/>
        <end position="206"/>
    </location>
</feature>
<feature type="topological domain" description="Cytoplasmic" evidence="2">
    <location>
        <begin position="207"/>
        <end position="219"/>
    </location>
</feature>
<feature type="glycosylation site" description="N-linked (GlcNAc...) asparagine" evidence="5">
    <location>
        <position position="129"/>
    </location>
</feature>
<feature type="glycosylation site" description="N-linked (GlcNAc...) asparagine" evidence="2">
    <location>
        <position position="148"/>
    </location>
</feature>
<feature type="mutagenesis site" description="About 50% loss of B-cell chemotactic activity." evidence="5">
    <original>L</original>
    <variation>A</variation>
    <location>
        <position position="43"/>
    </location>
</feature>
<feature type="mutagenesis site" description="About 50% loss of B-cell chemotactic activity." evidence="5">
    <original>F</original>
    <variation>A</variation>
    <location>
        <position position="44"/>
    </location>
</feature>
<feature type="helix" evidence="10">
    <location>
        <begin position="9"/>
        <end position="37"/>
    </location>
</feature>
<feature type="helix" evidence="10">
    <location>
        <begin position="52"/>
        <end position="76"/>
    </location>
</feature>
<feature type="helix" evidence="10">
    <location>
        <begin position="79"/>
        <end position="105"/>
    </location>
</feature>
<feature type="helix" evidence="10">
    <location>
        <begin position="107"/>
        <end position="123"/>
    </location>
</feature>
<feature type="turn" evidence="10">
    <location>
        <begin position="124"/>
        <end position="127"/>
    </location>
</feature>
<feature type="helix" evidence="10">
    <location>
        <begin position="129"/>
        <end position="142"/>
    </location>
</feature>
<feature type="strand" evidence="10">
    <location>
        <begin position="146"/>
        <end position="149"/>
    </location>
</feature>
<feature type="helix" evidence="10">
    <location>
        <begin position="150"/>
        <end position="152"/>
    </location>
</feature>
<feature type="strand" evidence="10">
    <location>
        <begin position="159"/>
        <end position="161"/>
    </location>
</feature>
<feature type="helix" evidence="10">
    <location>
        <begin position="170"/>
        <end position="180"/>
    </location>
</feature>
<feature type="helix" evidence="10">
    <location>
        <begin position="182"/>
        <end position="208"/>
    </location>
</feature>
<reference key="1">
    <citation type="journal article" date="1990" name="Immunogenetics">
        <title>The human leucocyte surface antigen CD53 is a protein structurally similar to the CD37 and MRC OX-44 antigens.</title>
        <authorList>
            <person name="Angelisova P."/>
            <person name="Vlcek C."/>
            <person name="Stefanova I."/>
            <person name="Lipoldova M."/>
            <person name="Horejsi V."/>
        </authorList>
    </citation>
    <scope>NUCLEOTIDE SEQUENCE [MRNA]</scope>
</reference>
<reference key="2">
    <citation type="journal article" date="1990" name="J. Immunol.">
        <title>Identification and analysis of cDNA clones encoding CD53. A pan-leukocyte antigen related to membrane transport proteins.</title>
        <authorList>
            <person name="Amiot M."/>
        </authorList>
    </citation>
    <scope>NUCLEOTIDE SEQUENCE [MRNA]</scope>
</reference>
<reference key="3">
    <citation type="submission" date="2004-10" db="EMBL/GenBank/DDBJ databases">
        <title>Cloning of human full-length CDSs in BD Creator(TM) system donor vector.</title>
        <authorList>
            <person name="Kalnine N."/>
            <person name="Chen X."/>
            <person name="Rolfs A."/>
            <person name="Halleck A."/>
            <person name="Hines L."/>
            <person name="Eisenstein S."/>
            <person name="Koundinya M."/>
            <person name="Raphael J."/>
            <person name="Moreira D."/>
            <person name="Kelley T."/>
            <person name="LaBaer J."/>
            <person name="Lin Y."/>
            <person name="Phelan M."/>
            <person name="Farmer A."/>
        </authorList>
    </citation>
    <scope>NUCLEOTIDE SEQUENCE [LARGE SCALE MRNA]</scope>
</reference>
<reference key="4">
    <citation type="journal article" date="2004" name="Nat. Genet.">
        <title>Complete sequencing and characterization of 21,243 full-length human cDNAs.</title>
        <authorList>
            <person name="Ota T."/>
            <person name="Suzuki Y."/>
            <person name="Nishikawa T."/>
            <person name="Otsuki T."/>
            <person name="Sugiyama T."/>
            <person name="Irie R."/>
            <person name="Wakamatsu A."/>
            <person name="Hayashi K."/>
            <person name="Sato H."/>
            <person name="Nagai K."/>
            <person name="Kimura K."/>
            <person name="Makita H."/>
            <person name="Sekine M."/>
            <person name="Obayashi M."/>
            <person name="Nishi T."/>
            <person name="Shibahara T."/>
            <person name="Tanaka T."/>
            <person name="Ishii S."/>
            <person name="Yamamoto J."/>
            <person name="Saito K."/>
            <person name="Kawai Y."/>
            <person name="Isono Y."/>
            <person name="Nakamura Y."/>
            <person name="Nagahari K."/>
            <person name="Murakami K."/>
            <person name="Yasuda T."/>
            <person name="Iwayanagi T."/>
            <person name="Wagatsuma M."/>
            <person name="Shiratori A."/>
            <person name="Sudo H."/>
            <person name="Hosoiri T."/>
            <person name="Kaku Y."/>
            <person name="Kodaira H."/>
            <person name="Kondo H."/>
            <person name="Sugawara M."/>
            <person name="Takahashi M."/>
            <person name="Kanda K."/>
            <person name="Yokoi T."/>
            <person name="Furuya T."/>
            <person name="Kikkawa E."/>
            <person name="Omura Y."/>
            <person name="Abe K."/>
            <person name="Kamihara K."/>
            <person name="Katsuta N."/>
            <person name="Sato K."/>
            <person name="Tanikawa M."/>
            <person name="Yamazaki M."/>
            <person name="Ninomiya K."/>
            <person name="Ishibashi T."/>
            <person name="Yamashita H."/>
            <person name="Murakawa K."/>
            <person name="Fujimori K."/>
            <person name="Tanai H."/>
            <person name="Kimata M."/>
            <person name="Watanabe M."/>
            <person name="Hiraoka S."/>
            <person name="Chiba Y."/>
            <person name="Ishida S."/>
            <person name="Ono Y."/>
            <person name="Takiguchi S."/>
            <person name="Watanabe S."/>
            <person name="Yosida M."/>
            <person name="Hotuta T."/>
            <person name="Kusano J."/>
            <person name="Kanehori K."/>
            <person name="Takahashi-Fujii A."/>
            <person name="Hara H."/>
            <person name="Tanase T.-O."/>
            <person name="Nomura Y."/>
            <person name="Togiya S."/>
            <person name="Komai F."/>
            <person name="Hara R."/>
            <person name="Takeuchi K."/>
            <person name="Arita M."/>
            <person name="Imose N."/>
            <person name="Musashino K."/>
            <person name="Yuuki H."/>
            <person name="Oshima A."/>
            <person name="Sasaki N."/>
            <person name="Aotsuka S."/>
            <person name="Yoshikawa Y."/>
            <person name="Matsunawa H."/>
            <person name="Ichihara T."/>
            <person name="Shiohata N."/>
            <person name="Sano S."/>
            <person name="Moriya S."/>
            <person name="Momiyama H."/>
            <person name="Satoh N."/>
            <person name="Takami S."/>
            <person name="Terashima Y."/>
            <person name="Suzuki O."/>
            <person name="Nakagawa S."/>
            <person name="Senoh A."/>
            <person name="Mizoguchi H."/>
            <person name="Goto Y."/>
            <person name="Shimizu F."/>
            <person name="Wakebe H."/>
            <person name="Hishigaki H."/>
            <person name="Watanabe T."/>
            <person name="Sugiyama A."/>
            <person name="Takemoto M."/>
            <person name="Kawakami B."/>
            <person name="Yamazaki M."/>
            <person name="Watanabe K."/>
            <person name="Kumagai A."/>
            <person name="Itakura S."/>
            <person name="Fukuzumi Y."/>
            <person name="Fujimori Y."/>
            <person name="Komiyama M."/>
            <person name="Tashiro H."/>
            <person name="Tanigami A."/>
            <person name="Fujiwara T."/>
            <person name="Ono T."/>
            <person name="Yamada K."/>
            <person name="Fujii Y."/>
            <person name="Ozaki K."/>
            <person name="Hirao M."/>
            <person name="Ohmori Y."/>
            <person name="Kawabata A."/>
            <person name="Hikiji T."/>
            <person name="Kobatake N."/>
            <person name="Inagaki H."/>
            <person name="Ikema Y."/>
            <person name="Okamoto S."/>
            <person name="Okitani R."/>
            <person name="Kawakami T."/>
            <person name="Noguchi S."/>
            <person name="Itoh T."/>
            <person name="Shigeta K."/>
            <person name="Senba T."/>
            <person name="Matsumura K."/>
            <person name="Nakajima Y."/>
            <person name="Mizuno T."/>
            <person name="Morinaga M."/>
            <person name="Sasaki M."/>
            <person name="Togashi T."/>
            <person name="Oyama M."/>
            <person name="Hata H."/>
            <person name="Watanabe M."/>
            <person name="Komatsu T."/>
            <person name="Mizushima-Sugano J."/>
            <person name="Satoh T."/>
            <person name="Shirai Y."/>
            <person name="Takahashi Y."/>
            <person name="Nakagawa K."/>
            <person name="Okumura K."/>
            <person name="Nagase T."/>
            <person name="Nomura N."/>
            <person name="Kikuchi H."/>
            <person name="Masuho Y."/>
            <person name="Yamashita R."/>
            <person name="Nakai K."/>
            <person name="Yada T."/>
            <person name="Nakamura Y."/>
            <person name="Ohara O."/>
            <person name="Isogai T."/>
            <person name="Sugano S."/>
        </authorList>
    </citation>
    <scope>NUCLEOTIDE SEQUENCE [LARGE SCALE MRNA]</scope>
    <source>
        <tissue>Spleen</tissue>
    </source>
</reference>
<reference key="5">
    <citation type="journal article" date="2006" name="Nature">
        <title>The DNA sequence and biological annotation of human chromosome 1.</title>
        <authorList>
            <person name="Gregory S.G."/>
            <person name="Barlow K.F."/>
            <person name="McLay K.E."/>
            <person name="Kaul R."/>
            <person name="Swarbreck D."/>
            <person name="Dunham A."/>
            <person name="Scott C.E."/>
            <person name="Howe K.L."/>
            <person name="Woodfine K."/>
            <person name="Spencer C.C.A."/>
            <person name="Jones M.C."/>
            <person name="Gillson C."/>
            <person name="Searle S."/>
            <person name="Zhou Y."/>
            <person name="Kokocinski F."/>
            <person name="McDonald L."/>
            <person name="Evans R."/>
            <person name="Phillips K."/>
            <person name="Atkinson A."/>
            <person name="Cooper R."/>
            <person name="Jones C."/>
            <person name="Hall R.E."/>
            <person name="Andrews T.D."/>
            <person name="Lloyd C."/>
            <person name="Ainscough R."/>
            <person name="Almeida J.P."/>
            <person name="Ambrose K.D."/>
            <person name="Anderson F."/>
            <person name="Andrew R.W."/>
            <person name="Ashwell R.I.S."/>
            <person name="Aubin K."/>
            <person name="Babbage A.K."/>
            <person name="Bagguley C.L."/>
            <person name="Bailey J."/>
            <person name="Beasley H."/>
            <person name="Bethel G."/>
            <person name="Bird C.P."/>
            <person name="Bray-Allen S."/>
            <person name="Brown J.Y."/>
            <person name="Brown A.J."/>
            <person name="Buckley D."/>
            <person name="Burton J."/>
            <person name="Bye J."/>
            <person name="Carder C."/>
            <person name="Chapman J.C."/>
            <person name="Clark S.Y."/>
            <person name="Clarke G."/>
            <person name="Clee C."/>
            <person name="Cobley V."/>
            <person name="Collier R.E."/>
            <person name="Corby N."/>
            <person name="Coville G.J."/>
            <person name="Davies J."/>
            <person name="Deadman R."/>
            <person name="Dunn M."/>
            <person name="Earthrowl M."/>
            <person name="Ellington A.G."/>
            <person name="Errington H."/>
            <person name="Frankish A."/>
            <person name="Frankland J."/>
            <person name="French L."/>
            <person name="Garner P."/>
            <person name="Garnett J."/>
            <person name="Gay L."/>
            <person name="Ghori M.R.J."/>
            <person name="Gibson R."/>
            <person name="Gilby L.M."/>
            <person name="Gillett W."/>
            <person name="Glithero R.J."/>
            <person name="Grafham D.V."/>
            <person name="Griffiths C."/>
            <person name="Griffiths-Jones S."/>
            <person name="Grocock R."/>
            <person name="Hammond S."/>
            <person name="Harrison E.S.I."/>
            <person name="Hart E."/>
            <person name="Haugen E."/>
            <person name="Heath P.D."/>
            <person name="Holmes S."/>
            <person name="Holt K."/>
            <person name="Howden P.J."/>
            <person name="Hunt A.R."/>
            <person name="Hunt S.E."/>
            <person name="Hunter G."/>
            <person name="Isherwood J."/>
            <person name="James R."/>
            <person name="Johnson C."/>
            <person name="Johnson D."/>
            <person name="Joy A."/>
            <person name="Kay M."/>
            <person name="Kershaw J.K."/>
            <person name="Kibukawa M."/>
            <person name="Kimberley A.M."/>
            <person name="King A."/>
            <person name="Knights A.J."/>
            <person name="Lad H."/>
            <person name="Laird G."/>
            <person name="Lawlor S."/>
            <person name="Leongamornlert D.A."/>
            <person name="Lloyd D.M."/>
            <person name="Loveland J."/>
            <person name="Lovell J."/>
            <person name="Lush M.J."/>
            <person name="Lyne R."/>
            <person name="Martin S."/>
            <person name="Mashreghi-Mohammadi M."/>
            <person name="Matthews L."/>
            <person name="Matthews N.S.W."/>
            <person name="McLaren S."/>
            <person name="Milne S."/>
            <person name="Mistry S."/>
            <person name="Moore M.J.F."/>
            <person name="Nickerson T."/>
            <person name="O'Dell C.N."/>
            <person name="Oliver K."/>
            <person name="Palmeiri A."/>
            <person name="Palmer S.A."/>
            <person name="Parker A."/>
            <person name="Patel D."/>
            <person name="Pearce A.V."/>
            <person name="Peck A.I."/>
            <person name="Pelan S."/>
            <person name="Phelps K."/>
            <person name="Phillimore B.J."/>
            <person name="Plumb R."/>
            <person name="Rajan J."/>
            <person name="Raymond C."/>
            <person name="Rouse G."/>
            <person name="Saenphimmachak C."/>
            <person name="Sehra H.K."/>
            <person name="Sheridan E."/>
            <person name="Shownkeen R."/>
            <person name="Sims S."/>
            <person name="Skuce C.D."/>
            <person name="Smith M."/>
            <person name="Steward C."/>
            <person name="Subramanian S."/>
            <person name="Sycamore N."/>
            <person name="Tracey A."/>
            <person name="Tromans A."/>
            <person name="Van Helmond Z."/>
            <person name="Wall M."/>
            <person name="Wallis J.M."/>
            <person name="White S."/>
            <person name="Whitehead S.L."/>
            <person name="Wilkinson J.E."/>
            <person name="Willey D.L."/>
            <person name="Williams H."/>
            <person name="Wilming L."/>
            <person name="Wray P.W."/>
            <person name="Wu Z."/>
            <person name="Coulson A."/>
            <person name="Vaudin M."/>
            <person name="Sulston J.E."/>
            <person name="Durbin R.M."/>
            <person name="Hubbard T."/>
            <person name="Wooster R."/>
            <person name="Dunham I."/>
            <person name="Carter N.P."/>
            <person name="McVean G."/>
            <person name="Ross M.T."/>
            <person name="Harrow J."/>
            <person name="Olson M.V."/>
            <person name="Beck S."/>
            <person name="Rogers J."/>
            <person name="Bentley D.R."/>
        </authorList>
    </citation>
    <scope>NUCLEOTIDE SEQUENCE [LARGE SCALE GENOMIC DNA]</scope>
</reference>
<reference key="6">
    <citation type="submission" date="2005-07" db="EMBL/GenBank/DDBJ databases">
        <authorList>
            <person name="Mural R.J."/>
            <person name="Istrail S."/>
            <person name="Sutton G.G."/>
            <person name="Florea L."/>
            <person name="Halpern A.L."/>
            <person name="Mobarry C.M."/>
            <person name="Lippert R."/>
            <person name="Walenz B."/>
            <person name="Shatkay H."/>
            <person name="Dew I."/>
            <person name="Miller J.R."/>
            <person name="Flanigan M.J."/>
            <person name="Edwards N.J."/>
            <person name="Bolanos R."/>
            <person name="Fasulo D."/>
            <person name="Halldorsson B.V."/>
            <person name="Hannenhalli S."/>
            <person name="Turner R."/>
            <person name="Yooseph S."/>
            <person name="Lu F."/>
            <person name="Nusskern D.R."/>
            <person name="Shue B.C."/>
            <person name="Zheng X.H."/>
            <person name="Zhong F."/>
            <person name="Delcher A.L."/>
            <person name="Huson D.H."/>
            <person name="Kravitz S.A."/>
            <person name="Mouchard L."/>
            <person name="Reinert K."/>
            <person name="Remington K.A."/>
            <person name="Clark A.G."/>
            <person name="Waterman M.S."/>
            <person name="Eichler E.E."/>
            <person name="Adams M.D."/>
            <person name="Hunkapiller M.W."/>
            <person name="Myers E.W."/>
            <person name="Venter J.C."/>
        </authorList>
    </citation>
    <scope>NUCLEOTIDE SEQUENCE [LARGE SCALE GENOMIC DNA]</scope>
</reference>
<reference key="7">
    <citation type="journal article" date="2004" name="Genome Res.">
        <title>The status, quality, and expansion of the NIH full-length cDNA project: the Mammalian Gene Collection (MGC).</title>
        <authorList>
            <consortium name="The MGC Project Team"/>
        </authorList>
    </citation>
    <scope>NUCLEOTIDE SEQUENCE [LARGE SCALE MRNA]</scope>
    <source>
        <tissue>Lymph</tissue>
    </source>
</reference>
<reference key="8">
    <citation type="journal article" date="1993" name="J. Immunol.">
        <title>CD53, a protein with four membrane-spanning domains, mediates signal transduction in human monocytes and B cells.</title>
        <authorList>
            <person name="Olweus J."/>
            <person name="Lund-Johansen F."/>
            <person name="Horejsi V."/>
        </authorList>
    </citation>
    <scope>FUNCTION</scope>
    <scope>TISSUE SPECIFICITY</scope>
</reference>
<reference key="9">
    <citation type="journal article" date="2011" name="Mol. Cell. Biol.">
        <title>SCIMP, a transmembrane adapter protein involved in major histocompatibility complex class II signaling.</title>
        <authorList>
            <person name="Draber P."/>
            <person name="Vonkova I."/>
            <person name="Stepanek O."/>
            <person name="Hrdinka M."/>
            <person name="Kucova M."/>
            <person name="Skopcova T."/>
            <person name="Otahal P."/>
            <person name="Angelisova P."/>
            <person name="Horejsi V."/>
            <person name="Yeung M."/>
            <person name="Weiss A."/>
            <person name="Brdicka T."/>
        </authorList>
    </citation>
    <scope>INTERACTION WITH SCIMP</scope>
</reference>
<reference key="10">
    <citation type="journal article" date="2017" name="Sci. Signal.">
        <title>Tetraspanin microdomains control localized protein kinase C signaling in B cells.</title>
        <authorList>
            <person name="Zuidscherwoude M."/>
            <person name="Dunlock V.E."/>
            <person name="van den Bogaart G."/>
            <person name="van Deventer S.J."/>
            <person name="van der Schaaf A."/>
            <person name="van Oostrum J."/>
            <person name="Goedhart J."/>
            <person name="In 't Hout J."/>
            <person name="Haemmerling G.J."/>
            <person name="Tanaka S."/>
            <person name="Nadler A."/>
            <person name="Schultz C."/>
            <person name="Wright M.D."/>
            <person name="Adjobo-Hermans M.J.W."/>
            <person name="van Spriel A.B."/>
        </authorList>
    </citation>
    <scope>FUNCTION</scope>
    <scope>SUBCELLULAR LOCATION</scope>
</reference>
<reference key="11">
    <citation type="journal article" date="2022" name="Cell Rep.">
        <title>Tetraspanin CD53 controls T cell immunity through regulation of CD45RO stability, mobility, and function.</title>
        <authorList>
            <person name="Dunlock V.E."/>
            <person name="Arp A.B."/>
            <person name="Singh S.P."/>
            <person name="Charrin S."/>
            <person name="Nguyen V."/>
            <person name="Jansen E."/>
            <person name="Schaper F."/>
            <person name="Beest M.T."/>
            <person name="Zuidscherwoude M."/>
            <person name="van Deventer S.J."/>
            <person name="Nakken B."/>
            <person name="Szodoray P."/>
            <person name="Demaria M.C."/>
            <person name="Wright M.D."/>
            <person name="Querol Cano L."/>
            <person name="Rubinstein E."/>
            <person name="van Spriel A.B."/>
        </authorList>
    </citation>
    <scope>FUNCTION</scope>
    <scope>INTERACTION WITH CD45/PTPRC</scope>
    <scope>SUBCELLULAR LOCATION</scope>
</reference>
<reference evidence="9" key="12">
    <citation type="journal article" date="2020" name="EMBO J.">
        <title>Open conformation of tetraspanins shapes interaction partner networks on cell membranes.</title>
        <authorList>
            <person name="Yang Y."/>
            <person name="Liu X.R."/>
            <person name="Greenberg Z.J."/>
            <person name="Zhou F."/>
            <person name="He P."/>
            <person name="Fan L."/>
            <person name="Liu S."/>
            <person name="Shen G."/>
            <person name="Egawa T."/>
            <person name="Gross M.L."/>
            <person name="Schuettpelz L.G."/>
            <person name="Li W."/>
        </authorList>
    </citation>
    <scope>X-RAY CRYSTALLOGRAPHY (2.90 ANGSTROMS)</scope>
    <scope>GLYCOSYLATION AT ASN-129</scope>
    <scope>FUNCTION</scope>
    <scope>MUTAGENESIS OF LEU-43 AND PHE-44</scope>
</reference>
<accession>P19397</accession>
<accession>B2R905</accession>
<accession>Q5U0D6</accession>
<proteinExistence type="evidence at protein level"/>